<feature type="peptide" id="PRO_0000312888" description="thr operon leader peptide">
    <location>
        <begin position="1"/>
        <end position="21"/>
    </location>
</feature>
<name>LPT_SALCH</name>
<reference key="1">
    <citation type="journal article" date="2005" name="Nucleic Acids Res.">
        <title>The genome sequence of Salmonella enterica serovar Choleraesuis, a highly invasive and resistant zoonotic pathogen.</title>
        <authorList>
            <person name="Chiu C.-H."/>
            <person name="Tang P."/>
            <person name="Chu C."/>
            <person name="Hu S."/>
            <person name="Bao Q."/>
            <person name="Yu J."/>
            <person name="Chou Y.-Y."/>
            <person name="Wang H.-S."/>
            <person name="Lee Y.-S."/>
        </authorList>
    </citation>
    <scope>NUCLEOTIDE SEQUENCE [LARGE SCALE GENOMIC DNA]</scope>
    <source>
        <strain>SC-B67</strain>
    </source>
</reference>
<dbReference type="EMBL" id="AE017220">
    <property type="protein sequence ID" value="AAX63907.1"/>
    <property type="molecule type" value="Genomic_DNA"/>
</dbReference>
<dbReference type="RefSeq" id="WP_001575544.1">
    <property type="nucleotide sequence ID" value="NC_006905.1"/>
</dbReference>
<dbReference type="KEGG" id="sec:SCH_0001"/>
<dbReference type="HOGENOM" id="CLU_221491_0_1_6"/>
<dbReference type="Proteomes" id="UP000000538">
    <property type="component" value="Chromosome"/>
</dbReference>
<dbReference type="GO" id="GO:0009088">
    <property type="term" value="P:threonine biosynthetic process"/>
    <property type="evidence" value="ECO:0007669"/>
    <property type="project" value="UniProtKB-UniRule"/>
</dbReference>
<dbReference type="GO" id="GO:0031556">
    <property type="term" value="P:transcriptional attenuation by ribosome"/>
    <property type="evidence" value="ECO:0007669"/>
    <property type="project" value="UniProtKB-UniRule"/>
</dbReference>
<dbReference type="HAMAP" id="MF_01907">
    <property type="entry name" value="Leader_Thr"/>
    <property type="match status" value="1"/>
</dbReference>
<dbReference type="InterPro" id="IPR011720">
    <property type="entry name" value="Thr_lead_pept"/>
</dbReference>
<dbReference type="NCBIfam" id="NF007329">
    <property type="entry name" value="PRK09816.1"/>
    <property type="match status" value="1"/>
</dbReference>
<dbReference type="NCBIfam" id="TIGR02077">
    <property type="entry name" value="thr_lead_pep"/>
    <property type="match status" value="1"/>
</dbReference>
<dbReference type="Pfam" id="PF08254">
    <property type="entry name" value="Leader_Thr"/>
    <property type="match status" value="1"/>
</dbReference>
<accession>Q57TQ4</accession>
<gene>
    <name evidence="1" type="primary">thrL</name>
    <name type="ordered locus">SCH_0001</name>
</gene>
<comment type="function">
    <text evidence="1">This protein is involved in control of the biosynthesis of threonine.</text>
</comment>
<comment type="similarity">
    <text evidence="1">Belongs to the thr operon leader peptide family.</text>
</comment>
<keyword id="KW-0028">Amino-acid biosynthesis</keyword>
<keyword id="KW-0428">Leader peptide</keyword>
<keyword id="KW-0791">Threonine biosynthesis</keyword>
<proteinExistence type="inferred from homology"/>
<protein>
    <recommendedName>
        <fullName evidence="1">thr operon leader peptide</fullName>
    </recommendedName>
    <alternativeName>
        <fullName evidence="1">thr operon attenuator</fullName>
    </alternativeName>
</protein>
<evidence type="ECO:0000255" key="1">
    <source>
        <dbReference type="HAMAP-Rule" id="MF_01907"/>
    </source>
</evidence>
<sequence>MNRISTTTITTITITTGNGAG</sequence>
<organism>
    <name type="scientific">Salmonella choleraesuis (strain SC-B67)</name>
    <dbReference type="NCBI Taxonomy" id="321314"/>
    <lineage>
        <taxon>Bacteria</taxon>
        <taxon>Pseudomonadati</taxon>
        <taxon>Pseudomonadota</taxon>
        <taxon>Gammaproteobacteria</taxon>
        <taxon>Enterobacterales</taxon>
        <taxon>Enterobacteriaceae</taxon>
        <taxon>Salmonella</taxon>
    </lineage>
</organism>